<name>AC75_NPVAC</name>
<organismHost>
    <name type="scientific">Lepidoptera</name>
    <name type="common">butterflies and moths</name>
    <dbReference type="NCBI Taxonomy" id="7088"/>
</organismHost>
<accession>Q06669</accession>
<organism>
    <name type="scientific">Autographa californica nuclear polyhedrosis virus</name>
    <name type="common">AcMNPV</name>
    <dbReference type="NCBI Taxonomy" id="46015"/>
    <lineage>
        <taxon>Viruses</taxon>
        <taxon>Viruses incertae sedis</taxon>
        <taxon>Naldaviricetes</taxon>
        <taxon>Lefavirales</taxon>
        <taxon>Baculoviridae</taxon>
        <taxon>Alphabaculovirus</taxon>
        <taxon>Alphabaculovirus aucalifornicae</taxon>
    </lineage>
</organism>
<dbReference type="EMBL" id="L22858">
    <property type="protein sequence ID" value="AAA66705.1"/>
    <property type="molecule type" value="Genomic_DNA"/>
</dbReference>
<dbReference type="EMBL" id="X71415">
    <property type="protein sequence ID" value="CAA50538.1"/>
    <property type="molecule type" value="Genomic_DNA"/>
</dbReference>
<dbReference type="PIR" id="D72859">
    <property type="entry name" value="D72859"/>
</dbReference>
<dbReference type="KEGG" id="vg:1403908"/>
<dbReference type="OrthoDB" id="16738at10239"/>
<dbReference type="Proteomes" id="UP000008292">
    <property type="component" value="Segment"/>
</dbReference>
<dbReference type="GO" id="GO:0030430">
    <property type="term" value="C:host cell cytoplasm"/>
    <property type="evidence" value="ECO:0000314"/>
    <property type="project" value="UniProtKB"/>
</dbReference>
<dbReference type="GO" id="GO:0042025">
    <property type="term" value="C:host cell nucleus"/>
    <property type="evidence" value="ECO:0000314"/>
    <property type="project" value="UniProtKB"/>
</dbReference>
<dbReference type="GO" id="GO:0044423">
    <property type="term" value="C:virion component"/>
    <property type="evidence" value="ECO:0000314"/>
    <property type="project" value="UniProtKB"/>
</dbReference>
<dbReference type="GO" id="GO:0046802">
    <property type="term" value="P:exit of virus from host cell nucleus by nuclear egress"/>
    <property type="evidence" value="ECO:0000314"/>
    <property type="project" value="UniProtKB"/>
</dbReference>
<dbReference type="InterPro" id="IPR010594">
    <property type="entry name" value="AcMNPV_Ac75"/>
</dbReference>
<dbReference type="Pfam" id="PF06648">
    <property type="entry name" value="AcMNPV_Ac75"/>
    <property type="match status" value="1"/>
</dbReference>
<proteinExistence type="evidence at protein level"/>
<gene>
    <name type="primary">Ac75</name>
    <name type="ORF">ORF75</name>
</gene>
<feature type="chain" id="PRO_0000133016" description="Protein Ac75">
    <location>
        <begin position="1"/>
        <end position="133"/>
    </location>
</feature>
<sequence length="133" mass="15512">MSNLMKNFFTELVKSTTFTTKVSVVKTTLSNWLCEQVYPDKDFSLKLKRVVNMFLNNEIENNKIYKLVETVDSSNKLSRRQVDFLIHALLNNVSVTFTLHRFVDDNVLTQDELSFLANFLVTKMDEAYQLPAY</sequence>
<keyword id="KW-1035">Host cytoplasm</keyword>
<keyword id="KW-1048">Host nucleus</keyword>
<keyword id="KW-1185">Reference proteome</keyword>
<keyword id="KW-0946">Virion</keyword>
<comment type="function">
    <text evidence="2 3">Plays a role in nuclear egress of nucleocapsids and intranuclear microvesicle formation.</text>
</comment>
<comment type="subunit">
    <text evidence="2">Interacts with protein Ac76.</text>
</comment>
<comment type="subcellular location">
    <subcellularLocation>
        <location evidence="1 2">Virion</location>
    </subcellularLocation>
    <subcellularLocation>
        <location evidence="1 2">Host cytoplasm</location>
    </subcellularLocation>
    <subcellularLocation>
        <location evidence="1 2">Host nucleus</location>
    </subcellularLocation>
    <text evidence="2">Localizes predominantly in the host intranuclear rim, site of several morphogenetic processes associated with occlusion-derived virions (ODV).</text>
</comment>
<protein>
    <recommendedName>
        <fullName>Protein Ac75</fullName>
    </recommendedName>
</protein>
<reference key="1">
    <citation type="journal article" date="1994" name="Virology">
        <title>The complete DNA sequence of Autographa californica nuclear polyhedrosis virus.</title>
        <authorList>
            <person name="Ayres M.D."/>
            <person name="Howard S.C."/>
            <person name="Kuzio J."/>
            <person name="Lopez-Ferber M."/>
            <person name="Possee R.D."/>
        </authorList>
    </citation>
    <scope>NUCLEOTIDE SEQUENCE [LARGE SCALE GENOMIC DNA]</scope>
    <source>
        <strain>C6</strain>
    </source>
</reference>
<reference key="2">
    <citation type="journal article" date="1994" name="J. Gen. Virol.">
        <title>Nucleotide sequence and genetic organization of a 7.3 kb region (map unit 47 to 52.5) of Autographa californica nuclear polyhedrosis virus fragment EcoRI-C.</title>
        <authorList>
            <person name="Kool M."/>
            <person name="Broer R."/>
            <person name="Zuidema D."/>
            <person name="Goldbach R.W."/>
            <person name="Vlak J.M."/>
        </authorList>
    </citation>
    <scope>NUCLEOTIDE SEQUENCE [GENOMIC DNA] OF 1-113</scope>
    <source>
        <strain>E2</strain>
    </source>
</reference>
<reference key="3">
    <citation type="journal article" date="2017" name="PLoS ONE">
        <title>Autographa californica multiple nucleopolyhedrovirus ac75 is required for egress of nucleocapsids from the nucleus and formation of de novo intranuclear membrane microvesicles.</title>
        <authorList>
            <person name="Guo Y.J."/>
            <person name="Fu S.H."/>
            <person name="Li L.L."/>
        </authorList>
    </citation>
    <scope>FUNCTION</scope>
    <scope>SUBCELLULAR LOCATION</scope>
</reference>
<reference key="4">
    <citation type="journal article" date="2018" name="J. Virol.">
        <title>Is Required for the Nuclear Egress of Nucleocapsids and Intranuclear Microvesicle Formation.</title>
        <authorList>
            <person name="Shi A."/>
            <person name="Hu Z."/>
            <person name="Zuo Y."/>
            <person name="Wang Y."/>
            <person name="Wu W."/>
            <person name="Yuan M."/>
            <person name="Yang K."/>
        </authorList>
    </citation>
    <scope>FUNCTION</scope>
    <scope>SUBCELLULAR LOCATION</scope>
    <scope>INTERACTION WITH PROTEIN AC76</scope>
</reference>
<evidence type="ECO:0000269" key="1">
    <source>
    </source>
</evidence>
<evidence type="ECO:0000269" key="2">
    <source>
    </source>
</evidence>
<evidence type="ECO:0000269" key="3">
    <source>
    </source>
</evidence>